<reference key="1">
    <citation type="journal article" date="2004" name="Nat. Genet.">
        <title>Evidence in the Legionella pneumophila genome for exploitation of host cell functions and high genome plasticity.</title>
        <authorList>
            <person name="Cazalet C."/>
            <person name="Rusniok C."/>
            <person name="Brueggemann H."/>
            <person name="Zidane N."/>
            <person name="Magnier A."/>
            <person name="Ma L."/>
            <person name="Tichit M."/>
            <person name="Jarraud S."/>
            <person name="Bouchier C."/>
            <person name="Vandenesch F."/>
            <person name="Kunst F."/>
            <person name="Etienne J."/>
            <person name="Glaser P."/>
            <person name="Buchrieser C."/>
        </authorList>
    </citation>
    <scope>NUCLEOTIDE SEQUENCE [LARGE SCALE GENOMIC DNA]</scope>
    <source>
        <strain>Lens</strain>
    </source>
</reference>
<keyword id="KW-0997">Cell inner membrane</keyword>
<keyword id="KW-1003">Cell membrane</keyword>
<keyword id="KW-0444">Lipid biosynthesis</keyword>
<keyword id="KW-0443">Lipid metabolism</keyword>
<keyword id="KW-0472">Membrane</keyword>
<keyword id="KW-0594">Phospholipid biosynthesis</keyword>
<keyword id="KW-1208">Phospholipid metabolism</keyword>
<keyword id="KW-0808">Transferase</keyword>
<keyword id="KW-0812">Transmembrane</keyword>
<keyword id="KW-1133">Transmembrane helix</keyword>
<feature type="chain" id="PRO_0000188390" description="Glycerol-3-phosphate acyltransferase">
    <location>
        <begin position="1"/>
        <end position="277"/>
    </location>
</feature>
<feature type="transmembrane region" description="Helical" evidence="1">
    <location>
        <begin position="3"/>
        <end position="23"/>
    </location>
</feature>
<feature type="transmembrane region" description="Helical" evidence="1">
    <location>
        <begin position="55"/>
        <end position="75"/>
    </location>
</feature>
<feature type="transmembrane region" description="Helical" evidence="1">
    <location>
        <begin position="79"/>
        <end position="99"/>
    </location>
</feature>
<feature type="transmembrane region" description="Helical" evidence="1">
    <location>
        <begin position="111"/>
        <end position="131"/>
    </location>
</feature>
<feature type="transmembrane region" description="Helical" evidence="1">
    <location>
        <begin position="155"/>
        <end position="175"/>
    </location>
</feature>
<feature type="region of interest" description="Disordered" evidence="2">
    <location>
        <begin position="231"/>
        <end position="277"/>
    </location>
</feature>
<feature type="compositionally biased region" description="Basic residues" evidence="2">
    <location>
        <begin position="240"/>
        <end position="253"/>
    </location>
</feature>
<feature type="compositionally biased region" description="Basic residues" evidence="2">
    <location>
        <begin position="262"/>
        <end position="271"/>
    </location>
</feature>
<comment type="function">
    <text evidence="1">Catalyzes the transfer of an acyl group from acyl-phosphate (acyl-PO(4)) to glycerol-3-phosphate (G3P) to form lysophosphatidic acid (LPA). This enzyme utilizes acyl-phosphate as fatty acyl donor, but not acyl-CoA or acyl-ACP.</text>
</comment>
<comment type="catalytic activity">
    <reaction evidence="1">
        <text>an acyl phosphate + sn-glycerol 3-phosphate = a 1-acyl-sn-glycero-3-phosphate + phosphate</text>
        <dbReference type="Rhea" id="RHEA:34075"/>
        <dbReference type="ChEBI" id="CHEBI:43474"/>
        <dbReference type="ChEBI" id="CHEBI:57597"/>
        <dbReference type="ChEBI" id="CHEBI:57970"/>
        <dbReference type="ChEBI" id="CHEBI:59918"/>
        <dbReference type="EC" id="2.3.1.275"/>
    </reaction>
</comment>
<comment type="pathway">
    <text evidence="1">Lipid metabolism; phospholipid metabolism.</text>
</comment>
<comment type="subunit">
    <text evidence="1">Probably interacts with PlsX.</text>
</comment>
<comment type="subcellular location">
    <subcellularLocation>
        <location evidence="1">Cell inner membrane</location>
        <topology evidence="1">Multi-pass membrane protein</topology>
    </subcellularLocation>
</comment>
<comment type="similarity">
    <text evidence="1">Belongs to the PlsY family.</text>
</comment>
<protein>
    <recommendedName>
        <fullName evidence="1">Glycerol-3-phosphate acyltransferase</fullName>
    </recommendedName>
    <alternativeName>
        <fullName evidence="1">Acyl-PO4 G3P acyltransferase</fullName>
    </alternativeName>
    <alternativeName>
        <fullName evidence="1">Acyl-phosphate--glycerol-3-phosphate acyltransferase</fullName>
    </alternativeName>
    <alternativeName>
        <fullName evidence="1">G3P acyltransferase</fullName>
        <shortName evidence="1">GPAT</shortName>
        <ecNumber evidence="1">2.3.1.275</ecNumber>
    </alternativeName>
    <alternativeName>
        <fullName evidence="1">Lysophosphatidic acid synthase</fullName>
        <shortName evidence="1">LPA synthase</shortName>
    </alternativeName>
</protein>
<accession>Q5WU90</accession>
<proteinExistence type="inferred from homology"/>
<gene>
    <name evidence="1" type="primary">plsY</name>
    <name type="ordered locus">lpl2278</name>
</gene>
<sequence>MAFFIFLILVGYLMGSINSAIIVCRTFGLPDPREEGSKNPGATNVLRLGGKQYGIMVMVFDALKGILPVILAKLLSAEPVTVAFTALAAVVGHMYPVFFHFRGGKGVATTIGALLAFHFVIGVMVAATWLLVANFWRYSSLASIASISLAPFYSLILVGNLNIFPPLFMITILVLYKHRDNFNRLIDGKEPKIKFKHSVIEEIMEASPATSAEQEFPGKEVIDTNIDEAEKTEQAEAVKKPKAKKATTKAKKTTSKEETAKKPKSTKPKTKTVKEKE</sequence>
<name>PLSY_LEGPL</name>
<organism>
    <name type="scientific">Legionella pneumophila (strain Lens)</name>
    <dbReference type="NCBI Taxonomy" id="297245"/>
    <lineage>
        <taxon>Bacteria</taxon>
        <taxon>Pseudomonadati</taxon>
        <taxon>Pseudomonadota</taxon>
        <taxon>Gammaproteobacteria</taxon>
        <taxon>Legionellales</taxon>
        <taxon>Legionellaceae</taxon>
        <taxon>Legionella</taxon>
    </lineage>
</organism>
<dbReference type="EC" id="2.3.1.275" evidence="1"/>
<dbReference type="EMBL" id="CR628337">
    <property type="protein sequence ID" value="CAH16518.1"/>
    <property type="molecule type" value="Genomic_DNA"/>
</dbReference>
<dbReference type="RefSeq" id="WP_011216248.1">
    <property type="nucleotide sequence ID" value="NC_006369.1"/>
</dbReference>
<dbReference type="SMR" id="Q5WU90"/>
<dbReference type="KEGG" id="lpf:lpl2278"/>
<dbReference type="LegioList" id="lpl2278"/>
<dbReference type="HOGENOM" id="CLU_081254_0_1_6"/>
<dbReference type="UniPathway" id="UPA00085"/>
<dbReference type="Proteomes" id="UP000002517">
    <property type="component" value="Chromosome"/>
</dbReference>
<dbReference type="GO" id="GO:0005886">
    <property type="term" value="C:plasma membrane"/>
    <property type="evidence" value="ECO:0007669"/>
    <property type="project" value="UniProtKB-SubCell"/>
</dbReference>
<dbReference type="GO" id="GO:0043772">
    <property type="term" value="F:acyl-phosphate glycerol-3-phosphate acyltransferase activity"/>
    <property type="evidence" value="ECO:0007669"/>
    <property type="project" value="UniProtKB-UniRule"/>
</dbReference>
<dbReference type="GO" id="GO:0008654">
    <property type="term" value="P:phospholipid biosynthetic process"/>
    <property type="evidence" value="ECO:0007669"/>
    <property type="project" value="UniProtKB-UniRule"/>
</dbReference>
<dbReference type="HAMAP" id="MF_01043">
    <property type="entry name" value="PlsY"/>
    <property type="match status" value="1"/>
</dbReference>
<dbReference type="InterPro" id="IPR003811">
    <property type="entry name" value="G3P_acylTferase_PlsY"/>
</dbReference>
<dbReference type="NCBIfam" id="TIGR00023">
    <property type="entry name" value="glycerol-3-phosphate 1-O-acyltransferase PlsY"/>
    <property type="match status" value="1"/>
</dbReference>
<dbReference type="PANTHER" id="PTHR30309:SF0">
    <property type="entry name" value="GLYCEROL-3-PHOSPHATE ACYLTRANSFERASE-RELATED"/>
    <property type="match status" value="1"/>
</dbReference>
<dbReference type="PANTHER" id="PTHR30309">
    <property type="entry name" value="INNER MEMBRANE PROTEIN YGIH"/>
    <property type="match status" value="1"/>
</dbReference>
<dbReference type="Pfam" id="PF02660">
    <property type="entry name" value="G3P_acyltransf"/>
    <property type="match status" value="1"/>
</dbReference>
<dbReference type="SMART" id="SM01207">
    <property type="entry name" value="G3P_acyltransf"/>
    <property type="match status" value="1"/>
</dbReference>
<evidence type="ECO:0000255" key="1">
    <source>
        <dbReference type="HAMAP-Rule" id="MF_01043"/>
    </source>
</evidence>
<evidence type="ECO:0000256" key="2">
    <source>
        <dbReference type="SAM" id="MobiDB-lite"/>
    </source>
</evidence>